<dbReference type="EC" id="5.3.1.1" evidence="5"/>
<dbReference type="EC" id="4.2.3.3" evidence="1"/>
<dbReference type="EMBL" id="BT021064">
    <property type="protein sequence ID" value="AAX09081.1"/>
    <property type="molecule type" value="mRNA"/>
</dbReference>
<dbReference type="EMBL" id="BC102903">
    <property type="protein sequence ID" value="AAI02904.1"/>
    <property type="molecule type" value="mRNA"/>
</dbReference>
<dbReference type="RefSeq" id="NP_001013607.1">
    <property type="nucleotide sequence ID" value="NM_001013589.3"/>
</dbReference>
<dbReference type="SMR" id="Q5E956"/>
<dbReference type="FunCoup" id="Q5E956">
    <property type="interactions" value="1588"/>
</dbReference>
<dbReference type="IntAct" id="Q5E956">
    <property type="interactions" value="1"/>
</dbReference>
<dbReference type="STRING" id="9913.ENSBTAP00000026358"/>
<dbReference type="Allergome" id="11905">
    <property type="allergen name" value="Bos d TPI"/>
</dbReference>
<dbReference type="PaxDb" id="9913-ENSBTAP00000026358"/>
<dbReference type="PeptideAtlas" id="Q5E956"/>
<dbReference type="GeneID" id="281543"/>
<dbReference type="KEGG" id="bta:281543"/>
<dbReference type="CTD" id="7167"/>
<dbReference type="eggNOG" id="KOG1643">
    <property type="taxonomic scope" value="Eukaryota"/>
</dbReference>
<dbReference type="HOGENOM" id="CLU_024251_2_0_1"/>
<dbReference type="InParanoid" id="Q5E956"/>
<dbReference type="OrthoDB" id="6715177at2759"/>
<dbReference type="TreeFam" id="TF300829"/>
<dbReference type="UniPathway" id="UPA00109">
    <property type="reaction ID" value="UER00189"/>
</dbReference>
<dbReference type="UniPathway" id="UPA00138"/>
<dbReference type="Proteomes" id="UP000009136">
    <property type="component" value="Unplaced"/>
</dbReference>
<dbReference type="GO" id="GO:0005829">
    <property type="term" value="C:cytosol"/>
    <property type="evidence" value="ECO:0000318"/>
    <property type="project" value="GO_Central"/>
</dbReference>
<dbReference type="GO" id="GO:0008929">
    <property type="term" value="F:methylglyoxal synthase activity"/>
    <property type="evidence" value="ECO:0000250"/>
    <property type="project" value="UniProtKB"/>
</dbReference>
<dbReference type="GO" id="GO:0042803">
    <property type="term" value="F:protein homodimerization activity"/>
    <property type="evidence" value="ECO:0000250"/>
    <property type="project" value="UniProtKB"/>
</dbReference>
<dbReference type="GO" id="GO:0004807">
    <property type="term" value="F:triose-phosphate isomerase activity"/>
    <property type="evidence" value="ECO:0000250"/>
    <property type="project" value="UniProtKB"/>
</dbReference>
<dbReference type="GO" id="GO:0006094">
    <property type="term" value="P:gluconeogenesis"/>
    <property type="evidence" value="ECO:0000318"/>
    <property type="project" value="GO_Central"/>
</dbReference>
<dbReference type="GO" id="GO:0046166">
    <property type="term" value="P:glyceraldehyde-3-phosphate biosynthetic process"/>
    <property type="evidence" value="ECO:0000250"/>
    <property type="project" value="UniProtKB"/>
</dbReference>
<dbReference type="GO" id="GO:0019563">
    <property type="term" value="P:glycerol catabolic process"/>
    <property type="evidence" value="ECO:0000318"/>
    <property type="project" value="GO_Central"/>
</dbReference>
<dbReference type="GO" id="GO:0006096">
    <property type="term" value="P:glycolytic process"/>
    <property type="evidence" value="ECO:0000318"/>
    <property type="project" value="GO_Central"/>
</dbReference>
<dbReference type="GO" id="GO:0019242">
    <property type="term" value="P:methylglyoxal biosynthetic process"/>
    <property type="evidence" value="ECO:0000250"/>
    <property type="project" value="UniProtKB"/>
</dbReference>
<dbReference type="CDD" id="cd00311">
    <property type="entry name" value="TIM"/>
    <property type="match status" value="1"/>
</dbReference>
<dbReference type="FunFam" id="3.20.20.70:FF:000025">
    <property type="entry name" value="Triosephosphate isomerase"/>
    <property type="match status" value="1"/>
</dbReference>
<dbReference type="Gene3D" id="3.20.20.70">
    <property type="entry name" value="Aldolase class I"/>
    <property type="match status" value="1"/>
</dbReference>
<dbReference type="HAMAP" id="MF_00147_B">
    <property type="entry name" value="TIM_B"/>
    <property type="match status" value="1"/>
</dbReference>
<dbReference type="InterPro" id="IPR013785">
    <property type="entry name" value="Aldolase_TIM"/>
</dbReference>
<dbReference type="InterPro" id="IPR035990">
    <property type="entry name" value="TIM_sf"/>
</dbReference>
<dbReference type="InterPro" id="IPR022896">
    <property type="entry name" value="TrioseP_Isoase_bac/euk"/>
</dbReference>
<dbReference type="InterPro" id="IPR000652">
    <property type="entry name" value="Triosephosphate_isomerase"/>
</dbReference>
<dbReference type="InterPro" id="IPR020861">
    <property type="entry name" value="Triosephosphate_isomerase_AS"/>
</dbReference>
<dbReference type="NCBIfam" id="TIGR00419">
    <property type="entry name" value="tim"/>
    <property type="match status" value="1"/>
</dbReference>
<dbReference type="PANTHER" id="PTHR21139">
    <property type="entry name" value="TRIOSEPHOSPHATE ISOMERASE"/>
    <property type="match status" value="1"/>
</dbReference>
<dbReference type="PANTHER" id="PTHR21139:SF2">
    <property type="entry name" value="TRIOSEPHOSPHATE ISOMERASE"/>
    <property type="match status" value="1"/>
</dbReference>
<dbReference type="Pfam" id="PF00121">
    <property type="entry name" value="TIM"/>
    <property type="match status" value="1"/>
</dbReference>
<dbReference type="SUPFAM" id="SSF51351">
    <property type="entry name" value="Triosephosphate isomerase (TIM)"/>
    <property type="match status" value="1"/>
</dbReference>
<dbReference type="PROSITE" id="PS00171">
    <property type="entry name" value="TIM_1"/>
    <property type="match status" value="1"/>
</dbReference>
<dbReference type="PROSITE" id="PS51440">
    <property type="entry name" value="TIM_2"/>
    <property type="match status" value="1"/>
</dbReference>
<proteinExistence type="evidence at transcript level"/>
<evidence type="ECO:0000250" key="1">
    <source>
        <dbReference type="UniProtKB" id="P00939"/>
    </source>
</evidence>
<evidence type="ECO:0000250" key="2">
    <source>
        <dbReference type="UniProtKB" id="P17751"/>
    </source>
</evidence>
<evidence type="ECO:0000250" key="3">
    <source>
        <dbReference type="UniProtKB" id="P48500"/>
    </source>
</evidence>
<evidence type="ECO:0000250" key="4">
    <source>
        <dbReference type="UniProtKB" id="P60174"/>
    </source>
</evidence>
<evidence type="ECO:0000255" key="5">
    <source>
        <dbReference type="PROSITE-ProRule" id="PRU10127"/>
    </source>
</evidence>
<evidence type="ECO:0000305" key="6"/>
<gene>
    <name type="primary">TPI1</name>
</gene>
<name>TPIS_BOVIN</name>
<accession>Q5E956</accession>
<keyword id="KW-0007">Acetylation</keyword>
<keyword id="KW-0963">Cytoplasm</keyword>
<keyword id="KW-0312">Gluconeogenesis</keyword>
<keyword id="KW-0324">Glycolysis</keyword>
<keyword id="KW-0413">Isomerase</keyword>
<keyword id="KW-1017">Isopeptide bond</keyword>
<keyword id="KW-0456">Lyase</keyword>
<keyword id="KW-0488">Methylation</keyword>
<keyword id="KW-0944">Nitration</keyword>
<keyword id="KW-0597">Phosphoprotein</keyword>
<keyword id="KW-1185">Reference proteome</keyword>
<keyword id="KW-0832">Ubl conjugation</keyword>
<reference key="1">
    <citation type="journal article" date="2005" name="BMC Genomics">
        <title>Characterization of 954 bovine full-CDS cDNA sequences.</title>
        <authorList>
            <person name="Harhay G.P."/>
            <person name="Sonstegard T.S."/>
            <person name="Keele J.W."/>
            <person name="Heaton M.P."/>
            <person name="Clawson M.L."/>
            <person name="Snelling W.M."/>
            <person name="Wiedmann R.T."/>
            <person name="Van Tassell C.P."/>
            <person name="Smith T.P.L."/>
        </authorList>
    </citation>
    <scope>NUCLEOTIDE SEQUENCE [LARGE SCALE MRNA]</scope>
</reference>
<reference key="2">
    <citation type="submission" date="2005-08" db="EMBL/GenBank/DDBJ databases">
        <authorList>
            <consortium name="NIH - Mammalian Gene Collection (MGC) project"/>
        </authorList>
    </citation>
    <scope>NUCLEOTIDE SEQUENCE [LARGE SCALE MRNA]</scope>
    <source>
        <strain>Hereford</strain>
        <tissue>Hypothalamus</tissue>
    </source>
</reference>
<sequence length="249" mass="26690">MAPSRKFFVGGNWKMNGRKNNLGELINTLNAAKVPADTEVVCAPPTAYIDFARQKLDPKIAVAAQNCYKVANGAFTGEISPGMIKDLGATWVVLGHSERRHVFGESDELIGQKVAHALAEGLGVIACIGEKLDEREAGITEKVVFEQTKVIADNVKDWSKVVLAYEPVWAIGTGKTATPQQAQEVHEKLRGWLKSNVSDAVAQSARIIYGGSVTGATCKELASQPDVDGFLVGGASLKPEFVDIINAKQ</sequence>
<comment type="function">
    <text evidence="1">Triosephosphate isomerase is an extremely efficient metabolic enzyme that catalyzes the interconversion between dihydroxyacetone phosphate (DHAP) and D-glyceraldehyde-3-phosphate (G3P) in glycolysis and gluconeogenesis.</text>
</comment>
<comment type="function">
    <text evidence="1">It is also responsible for the non-negligible production of methylglyoxal a reactive cytotoxic side-product that modifies and can alter proteins, DNA and lipids.</text>
</comment>
<comment type="catalytic activity">
    <reaction evidence="1">
        <text>dihydroxyacetone phosphate = methylglyoxal + phosphate</text>
        <dbReference type="Rhea" id="RHEA:17937"/>
        <dbReference type="ChEBI" id="CHEBI:17158"/>
        <dbReference type="ChEBI" id="CHEBI:43474"/>
        <dbReference type="ChEBI" id="CHEBI:57642"/>
        <dbReference type="EC" id="4.2.3.3"/>
    </reaction>
</comment>
<comment type="catalytic activity">
    <reaction evidence="5">
        <text>D-glyceraldehyde 3-phosphate = dihydroxyacetone phosphate</text>
        <dbReference type="Rhea" id="RHEA:18585"/>
        <dbReference type="ChEBI" id="CHEBI:57642"/>
        <dbReference type="ChEBI" id="CHEBI:59776"/>
        <dbReference type="EC" id="5.3.1.1"/>
    </reaction>
</comment>
<comment type="pathway">
    <text evidence="5">Carbohydrate degradation; glycolysis; D-glyceraldehyde 3-phosphate from glycerone phosphate: step 1/1.</text>
</comment>
<comment type="pathway">
    <text evidence="5">Carbohydrate biosynthesis; gluconeogenesis.</text>
</comment>
<comment type="subunit">
    <text evidence="5">Homodimer.</text>
</comment>
<comment type="subcellular location">
    <subcellularLocation>
        <location evidence="5">Cytoplasm</location>
    </subcellularLocation>
</comment>
<comment type="similarity">
    <text evidence="6">Belongs to the triosephosphate isomerase family.</text>
</comment>
<organism>
    <name type="scientific">Bos taurus</name>
    <name type="common">Bovine</name>
    <dbReference type="NCBI Taxonomy" id="9913"/>
    <lineage>
        <taxon>Eukaryota</taxon>
        <taxon>Metazoa</taxon>
        <taxon>Chordata</taxon>
        <taxon>Craniata</taxon>
        <taxon>Vertebrata</taxon>
        <taxon>Euteleostomi</taxon>
        <taxon>Mammalia</taxon>
        <taxon>Eutheria</taxon>
        <taxon>Laurasiatheria</taxon>
        <taxon>Artiodactyla</taxon>
        <taxon>Ruminantia</taxon>
        <taxon>Pecora</taxon>
        <taxon>Bovidae</taxon>
        <taxon>Bovinae</taxon>
        <taxon>Bos</taxon>
    </lineage>
</organism>
<feature type="initiator methionine" description="Removed" evidence="4">
    <location>
        <position position="1"/>
    </location>
</feature>
<feature type="chain" id="PRO_0000236271" description="Triosephosphate isomerase">
    <location>
        <begin position="2"/>
        <end position="249"/>
    </location>
</feature>
<feature type="active site" description="Electrophile" evidence="5">
    <location>
        <position position="96"/>
    </location>
</feature>
<feature type="active site" description="Proton acceptor" evidence="5">
    <location>
        <position position="166"/>
    </location>
</feature>
<feature type="binding site" evidence="5">
    <location>
        <position position="12"/>
    </location>
    <ligand>
        <name>substrate</name>
    </ligand>
</feature>
<feature type="binding site" evidence="5">
    <location>
        <position position="14"/>
    </location>
    <ligand>
        <name>substrate</name>
    </ligand>
</feature>
<feature type="modified residue" description="N6-acetyllysine" evidence="4">
    <location>
        <position position="14"/>
    </location>
</feature>
<feature type="modified residue" description="3'-nitrotyrosine" evidence="2">
    <location>
        <position position="68"/>
    </location>
</feature>
<feature type="modified residue" description="Phosphoserine" evidence="4">
    <location>
        <position position="80"/>
    </location>
</feature>
<feature type="modified residue" description="Phosphoserine" evidence="3">
    <location>
        <position position="106"/>
    </location>
</feature>
<feature type="modified residue" description="N6-succinyllysine" evidence="2">
    <location>
        <position position="149"/>
    </location>
</feature>
<feature type="modified residue" description="N6-acetyllysine; alternate" evidence="2">
    <location>
        <position position="156"/>
    </location>
</feature>
<feature type="modified residue" description="N6-succinyllysine; alternate" evidence="2">
    <location>
        <position position="156"/>
    </location>
</feature>
<feature type="modified residue" description="Phosphoserine" evidence="2">
    <location>
        <position position="159"/>
    </location>
</feature>
<feature type="modified residue" description="Phosphothreonine" evidence="2">
    <location>
        <position position="173"/>
    </location>
</feature>
<feature type="modified residue" description="N6-acetyllysine; alternate" evidence="4">
    <location>
        <position position="194"/>
    </location>
</feature>
<feature type="modified residue" description="N6-methyllysine; alternate" evidence="4">
    <location>
        <position position="194"/>
    </location>
</feature>
<feature type="modified residue" description="N6-succinyllysine; alternate" evidence="2">
    <location>
        <position position="194"/>
    </location>
</feature>
<feature type="modified residue" description="Phosphoserine" evidence="3">
    <location>
        <position position="198"/>
    </location>
</feature>
<feature type="modified residue" description="3'-nitrotyrosine" evidence="2">
    <location>
        <position position="209"/>
    </location>
</feature>
<feature type="modified residue" description="Phosphoserine" evidence="4">
    <location>
        <position position="212"/>
    </location>
</feature>
<feature type="modified residue" description="Phosphothreonine" evidence="4">
    <location>
        <position position="214"/>
    </location>
</feature>
<feature type="modified residue" description="Phosphoserine" evidence="4">
    <location>
        <position position="223"/>
    </location>
</feature>
<feature type="modified residue" description="N6-acetyllysine" evidence="4">
    <location>
        <position position="238"/>
    </location>
</feature>
<feature type="cross-link" description="Glycyl lysine isopeptide (Lys-Gly) (interchain with G-Cter in SUMO1)" evidence="4">
    <location>
        <position position="142"/>
    </location>
</feature>
<protein>
    <recommendedName>
        <fullName>Triosephosphate isomerase</fullName>
        <shortName>TIM</shortName>
        <ecNumber evidence="5">5.3.1.1</ecNumber>
    </recommendedName>
    <alternativeName>
        <fullName evidence="1">Methylglyoxal synthase</fullName>
        <ecNumber evidence="1">4.2.3.3</ecNumber>
    </alternativeName>
    <alternativeName>
        <fullName>Triose-phosphate isomerase</fullName>
    </alternativeName>
</protein>